<gene>
    <name type="ordered locus">LCK_01004</name>
</gene>
<proteinExistence type="inferred from homology"/>
<accession>B1MZ79</accession>
<sequence length="118" mass="13326">MTVNIYDNANEMASVLKETEQYTAWQNAFNAIQADEEAKQLFTKFQSVQVAVQQMMQSQQQPSADQEKEWDAIAADVQKNELITALLSTEQALNTLLTEINDIVTKPVADAYAKLRQK</sequence>
<organism>
    <name type="scientific">Leuconostoc citreum (strain KM20)</name>
    <dbReference type="NCBI Taxonomy" id="349519"/>
    <lineage>
        <taxon>Bacteria</taxon>
        <taxon>Bacillati</taxon>
        <taxon>Bacillota</taxon>
        <taxon>Bacilli</taxon>
        <taxon>Lactobacillales</taxon>
        <taxon>Lactobacillaceae</taxon>
        <taxon>Leuconostoc</taxon>
    </lineage>
</organism>
<evidence type="ECO:0000255" key="1">
    <source>
        <dbReference type="HAMAP-Rule" id="MF_01526"/>
    </source>
</evidence>
<reference key="1">
    <citation type="journal article" date="2008" name="J. Bacteriol.">
        <title>Complete genome sequence of Leuconostoc citreum KM20.</title>
        <authorList>
            <person name="Kim J.F."/>
            <person name="Jeong H."/>
            <person name="Lee J.-S."/>
            <person name="Choi S.-H."/>
            <person name="Ha M."/>
            <person name="Hur C.-G."/>
            <person name="Kim J.-S."/>
            <person name="Lee S."/>
            <person name="Park H.-S."/>
            <person name="Park Y.-H."/>
            <person name="Oh T.K."/>
        </authorList>
    </citation>
    <scope>NUCLEOTIDE SEQUENCE [LARGE SCALE GENOMIC DNA]</scope>
    <source>
        <strain>KM20</strain>
    </source>
</reference>
<keyword id="KW-1185">Reference proteome</keyword>
<name>Y1004_LEUCK</name>
<protein>
    <recommendedName>
        <fullName evidence="1">UPF0342 protein LCK_01004</fullName>
    </recommendedName>
</protein>
<feature type="chain" id="PRO_1000198526" description="UPF0342 protein LCK_01004">
    <location>
        <begin position="1"/>
        <end position="118"/>
    </location>
</feature>
<dbReference type="EMBL" id="DQ489736">
    <property type="protein sequence ID" value="ACA82831.1"/>
    <property type="molecule type" value="Genomic_DNA"/>
</dbReference>
<dbReference type="RefSeq" id="WP_004900744.1">
    <property type="nucleotide sequence ID" value="NC_010471.1"/>
</dbReference>
<dbReference type="SMR" id="B1MZ79"/>
<dbReference type="STRING" id="349519.LCK_01004"/>
<dbReference type="KEGG" id="lci:LCK_01004"/>
<dbReference type="eggNOG" id="COG3679">
    <property type="taxonomic scope" value="Bacteria"/>
</dbReference>
<dbReference type="HOGENOM" id="CLU_140243_3_1_9"/>
<dbReference type="OrthoDB" id="9811402at2"/>
<dbReference type="Proteomes" id="UP000002166">
    <property type="component" value="Chromosome"/>
</dbReference>
<dbReference type="Gene3D" id="1.20.1500.10">
    <property type="entry name" value="YheA/YmcA-like"/>
    <property type="match status" value="1"/>
</dbReference>
<dbReference type="HAMAP" id="MF_01526">
    <property type="entry name" value="UPF0342"/>
    <property type="match status" value="1"/>
</dbReference>
<dbReference type="InterPro" id="IPR010368">
    <property type="entry name" value="Com_YlbF"/>
</dbReference>
<dbReference type="InterPro" id="IPR023378">
    <property type="entry name" value="YheA/YmcA-like_dom_sf"/>
</dbReference>
<dbReference type="Pfam" id="PF06133">
    <property type="entry name" value="Com_YlbF"/>
    <property type="match status" value="1"/>
</dbReference>
<dbReference type="SUPFAM" id="SSF158622">
    <property type="entry name" value="YheA/YmcA-like"/>
    <property type="match status" value="1"/>
</dbReference>
<comment type="similarity">
    <text evidence="1">Belongs to the UPF0342 family.</text>
</comment>